<comment type="catalytic activity">
    <reaction evidence="1">
        <text>N-(5-phospho-beta-D-ribosyl)anthranilate = 1-(2-carboxyphenylamino)-1-deoxy-D-ribulose 5-phosphate</text>
        <dbReference type="Rhea" id="RHEA:21540"/>
        <dbReference type="ChEBI" id="CHEBI:18277"/>
        <dbReference type="ChEBI" id="CHEBI:58613"/>
        <dbReference type="EC" id="5.3.1.24"/>
    </reaction>
</comment>
<comment type="pathway">
    <text evidence="1">Amino-acid biosynthesis; L-tryptophan biosynthesis; L-tryptophan from chorismate: step 3/5.</text>
</comment>
<comment type="similarity">
    <text evidence="1">Belongs to the TrpF family.</text>
</comment>
<reference key="1">
    <citation type="journal article" date="2015" name="Microbiology">
        <title>Genome of Methanoregula boonei 6A8 reveals adaptations to oligotrophic peatland environments.</title>
        <authorList>
            <person name="Braeuer S."/>
            <person name="Cadillo-Quiroz H."/>
            <person name="Kyrpides N."/>
            <person name="Woyke T."/>
            <person name="Goodwin L."/>
            <person name="Detter C."/>
            <person name="Podell S."/>
            <person name="Yavitt J.B."/>
            <person name="Zinder S.H."/>
        </authorList>
    </citation>
    <scope>NUCLEOTIDE SEQUENCE [LARGE SCALE GENOMIC DNA]</scope>
    <source>
        <strain>DSM 21154 / JCM 14090 / 6A8</strain>
    </source>
</reference>
<protein>
    <recommendedName>
        <fullName evidence="1">N-(5'-phosphoribosyl)anthranilate isomerase</fullName>
        <shortName evidence="1">PRAI</shortName>
        <ecNumber evidence="1">5.3.1.24</ecNumber>
    </recommendedName>
</protein>
<gene>
    <name evidence="1" type="primary">trpF</name>
    <name type="ordered locus">Mboo_0224</name>
</gene>
<keyword id="KW-0028">Amino-acid biosynthesis</keyword>
<keyword id="KW-0057">Aromatic amino acid biosynthesis</keyword>
<keyword id="KW-0413">Isomerase</keyword>
<keyword id="KW-1185">Reference proteome</keyword>
<keyword id="KW-0822">Tryptophan biosynthesis</keyword>
<proteinExistence type="inferred from homology"/>
<dbReference type="EC" id="5.3.1.24" evidence="1"/>
<dbReference type="EMBL" id="CP000780">
    <property type="protein sequence ID" value="ABS54746.1"/>
    <property type="molecule type" value="Genomic_DNA"/>
</dbReference>
<dbReference type="RefSeq" id="WP_011991234.1">
    <property type="nucleotide sequence ID" value="NC_009712.1"/>
</dbReference>
<dbReference type="SMR" id="A7I4T5"/>
<dbReference type="STRING" id="456442.Mboo_0224"/>
<dbReference type="GeneID" id="5410467"/>
<dbReference type="KEGG" id="mbn:Mboo_0224"/>
<dbReference type="eggNOG" id="arCOG01983">
    <property type="taxonomic scope" value="Archaea"/>
</dbReference>
<dbReference type="HOGENOM" id="CLU_076364_2_0_2"/>
<dbReference type="OrthoDB" id="27513at2157"/>
<dbReference type="UniPathway" id="UPA00035">
    <property type="reaction ID" value="UER00042"/>
</dbReference>
<dbReference type="Proteomes" id="UP000002408">
    <property type="component" value="Chromosome"/>
</dbReference>
<dbReference type="GO" id="GO:0004640">
    <property type="term" value="F:phosphoribosylanthranilate isomerase activity"/>
    <property type="evidence" value="ECO:0007669"/>
    <property type="project" value="UniProtKB-UniRule"/>
</dbReference>
<dbReference type="GO" id="GO:0000162">
    <property type="term" value="P:L-tryptophan biosynthetic process"/>
    <property type="evidence" value="ECO:0007669"/>
    <property type="project" value="UniProtKB-UniRule"/>
</dbReference>
<dbReference type="CDD" id="cd00405">
    <property type="entry name" value="PRAI"/>
    <property type="match status" value="1"/>
</dbReference>
<dbReference type="Gene3D" id="3.20.20.70">
    <property type="entry name" value="Aldolase class I"/>
    <property type="match status" value="1"/>
</dbReference>
<dbReference type="HAMAP" id="MF_00135">
    <property type="entry name" value="PRAI"/>
    <property type="match status" value="1"/>
</dbReference>
<dbReference type="InterPro" id="IPR013785">
    <property type="entry name" value="Aldolase_TIM"/>
</dbReference>
<dbReference type="InterPro" id="IPR001240">
    <property type="entry name" value="PRAI_dom"/>
</dbReference>
<dbReference type="InterPro" id="IPR011060">
    <property type="entry name" value="RibuloseP-bd_barrel"/>
</dbReference>
<dbReference type="InterPro" id="IPR044643">
    <property type="entry name" value="TrpF_fam"/>
</dbReference>
<dbReference type="PANTHER" id="PTHR42894">
    <property type="entry name" value="N-(5'-PHOSPHORIBOSYL)ANTHRANILATE ISOMERASE"/>
    <property type="match status" value="1"/>
</dbReference>
<dbReference type="PANTHER" id="PTHR42894:SF1">
    <property type="entry name" value="N-(5'-PHOSPHORIBOSYL)ANTHRANILATE ISOMERASE"/>
    <property type="match status" value="1"/>
</dbReference>
<dbReference type="Pfam" id="PF00697">
    <property type="entry name" value="PRAI"/>
    <property type="match status" value="1"/>
</dbReference>
<dbReference type="SUPFAM" id="SSF51366">
    <property type="entry name" value="Ribulose-phoshate binding barrel"/>
    <property type="match status" value="1"/>
</dbReference>
<name>TRPF_METB6</name>
<organism>
    <name type="scientific">Methanoregula boonei (strain DSM 21154 / JCM 14090 / 6A8)</name>
    <dbReference type="NCBI Taxonomy" id="456442"/>
    <lineage>
        <taxon>Archaea</taxon>
        <taxon>Methanobacteriati</taxon>
        <taxon>Methanobacteriota</taxon>
        <taxon>Stenosarchaea group</taxon>
        <taxon>Methanomicrobia</taxon>
        <taxon>Methanomicrobiales</taxon>
        <taxon>Methanoregulaceae</taxon>
        <taxon>Methanoregula</taxon>
    </lineage>
</organism>
<feature type="chain" id="PRO_1000057876" description="N-(5'-phosphoribosyl)anthranilate isomerase">
    <location>
        <begin position="1"/>
        <end position="195"/>
    </location>
</feature>
<accession>A7I4T5</accession>
<sequence>MRIKICGITRVEDVLFAEKAGADAIGVVMYSPTSRRSVPDAKAREIFSALGPFVTRVVVTHTESESDLEKILAIRPDAIQISHPFVFEKYPGVRVLRVIGRGDAVPTDCDAVIVDESMGAGKAFDQEFAKVVAKTSRVPVILAGGLTPENVGLAIREIRPHAVDVASGVETEPGIKDHTKIAAFIRAAREADHGT</sequence>
<evidence type="ECO:0000255" key="1">
    <source>
        <dbReference type="HAMAP-Rule" id="MF_00135"/>
    </source>
</evidence>